<feature type="chain" id="PRO_0000094349" description="Elongation factor P">
    <location>
        <begin position="1"/>
        <end position="185"/>
    </location>
</feature>
<gene>
    <name evidence="1" type="primary">efp</name>
    <name type="ordered locus">STH1864</name>
</gene>
<dbReference type="EMBL" id="AP006840">
    <property type="protein sequence ID" value="BAD40849.1"/>
    <property type="molecule type" value="Genomic_DNA"/>
</dbReference>
<dbReference type="RefSeq" id="WP_011195992.1">
    <property type="nucleotide sequence ID" value="NC_006177.1"/>
</dbReference>
<dbReference type="SMR" id="Q67N94"/>
<dbReference type="STRING" id="292459.STH1864"/>
<dbReference type="KEGG" id="sth:STH1864"/>
<dbReference type="eggNOG" id="COG0231">
    <property type="taxonomic scope" value="Bacteria"/>
</dbReference>
<dbReference type="HOGENOM" id="CLU_074944_0_1_9"/>
<dbReference type="OrthoDB" id="9801844at2"/>
<dbReference type="UniPathway" id="UPA00345"/>
<dbReference type="Proteomes" id="UP000000417">
    <property type="component" value="Chromosome"/>
</dbReference>
<dbReference type="GO" id="GO:0005737">
    <property type="term" value="C:cytoplasm"/>
    <property type="evidence" value="ECO:0007669"/>
    <property type="project" value="UniProtKB-SubCell"/>
</dbReference>
<dbReference type="GO" id="GO:0003746">
    <property type="term" value="F:translation elongation factor activity"/>
    <property type="evidence" value="ECO:0007669"/>
    <property type="project" value="UniProtKB-UniRule"/>
</dbReference>
<dbReference type="GO" id="GO:0043043">
    <property type="term" value="P:peptide biosynthetic process"/>
    <property type="evidence" value="ECO:0007669"/>
    <property type="project" value="InterPro"/>
</dbReference>
<dbReference type="CDD" id="cd04470">
    <property type="entry name" value="S1_EF-P_repeat_1"/>
    <property type="match status" value="1"/>
</dbReference>
<dbReference type="CDD" id="cd05794">
    <property type="entry name" value="S1_EF-P_repeat_2"/>
    <property type="match status" value="1"/>
</dbReference>
<dbReference type="FunFam" id="2.30.30.30:FF:000003">
    <property type="entry name" value="Elongation factor P"/>
    <property type="match status" value="1"/>
</dbReference>
<dbReference type="FunFam" id="2.40.50.140:FF:000004">
    <property type="entry name" value="Elongation factor P"/>
    <property type="match status" value="1"/>
</dbReference>
<dbReference type="FunFam" id="2.40.50.140:FF:000009">
    <property type="entry name" value="Elongation factor P"/>
    <property type="match status" value="1"/>
</dbReference>
<dbReference type="Gene3D" id="2.30.30.30">
    <property type="match status" value="1"/>
</dbReference>
<dbReference type="Gene3D" id="2.40.50.140">
    <property type="entry name" value="Nucleic acid-binding proteins"/>
    <property type="match status" value="2"/>
</dbReference>
<dbReference type="HAMAP" id="MF_00141">
    <property type="entry name" value="EF_P"/>
    <property type="match status" value="1"/>
</dbReference>
<dbReference type="InterPro" id="IPR015365">
    <property type="entry name" value="Elong-fact-P_C"/>
</dbReference>
<dbReference type="InterPro" id="IPR012340">
    <property type="entry name" value="NA-bd_OB-fold"/>
</dbReference>
<dbReference type="InterPro" id="IPR014722">
    <property type="entry name" value="Rib_uL2_dom2"/>
</dbReference>
<dbReference type="InterPro" id="IPR020599">
    <property type="entry name" value="Transl_elong_fac_P/YeiP"/>
</dbReference>
<dbReference type="InterPro" id="IPR013185">
    <property type="entry name" value="Transl_elong_KOW-like"/>
</dbReference>
<dbReference type="InterPro" id="IPR001059">
    <property type="entry name" value="Transl_elong_P/YeiP_cen"/>
</dbReference>
<dbReference type="InterPro" id="IPR013852">
    <property type="entry name" value="Transl_elong_P/YeiP_CS"/>
</dbReference>
<dbReference type="InterPro" id="IPR011768">
    <property type="entry name" value="Transl_elongation_fac_P"/>
</dbReference>
<dbReference type="InterPro" id="IPR008991">
    <property type="entry name" value="Translation_prot_SH3-like_sf"/>
</dbReference>
<dbReference type="NCBIfam" id="TIGR00038">
    <property type="entry name" value="efp"/>
    <property type="match status" value="1"/>
</dbReference>
<dbReference type="NCBIfam" id="NF001810">
    <property type="entry name" value="PRK00529.1"/>
    <property type="match status" value="1"/>
</dbReference>
<dbReference type="PANTHER" id="PTHR30053">
    <property type="entry name" value="ELONGATION FACTOR P"/>
    <property type="match status" value="1"/>
</dbReference>
<dbReference type="PANTHER" id="PTHR30053:SF12">
    <property type="entry name" value="ELONGATION FACTOR P (EF-P) FAMILY PROTEIN"/>
    <property type="match status" value="1"/>
</dbReference>
<dbReference type="Pfam" id="PF01132">
    <property type="entry name" value="EFP"/>
    <property type="match status" value="1"/>
</dbReference>
<dbReference type="Pfam" id="PF08207">
    <property type="entry name" value="EFP_N"/>
    <property type="match status" value="1"/>
</dbReference>
<dbReference type="Pfam" id="PF09285">
    <property type="entry name" value="Elong-fact-P_C"/>
    <property type="match status" value="1"/>
</dbReference>
<dbReference type="PIRSF" id="PIRSF005901">
    <property type="entry name" value="EF-P"/>
    <property type="match status" value="1"/>
</dbReference>
<dbReference type="SMART" id="SM01185">
    <property type="entry name" value="EFP"/>
    <property type="match status" value="1"/>
</dbReference>
<dbReference type="SMART" id="SM00841">
    <property type="entry name" value="Elong-fact-P_C"/>
    <property type="match status" value="1"/>
</dbReference>
<dbReference type="SUPFAM" id="SSF50249">
    <property type="entry name" value="Nucleic acid-binding proteins"/>
    <property type="match status" value="2"/>
</dbReference>
<dbReference type="SUPFAM" id="SSF50104">
    <property type="entry name" value="Translation proteins SH3-like domain"/>
    <property type="match status" value="1"/>
</dbReference>
<dbReference type="PROSITE" id="PS01275">
    <property type="entry name" value="EFP"/>
    <property type="match status" value="1"/>
</dbReference>
<organism>
    <name type="scientific">Symbiobacterium thermophilum (strain DSM 24528 / JCM 14929 / IAM 14863 / T)</name>
    <dbReference type="NCBI Taxonomy" id="292459"/>
    <lineage>
        <taxon>Bacteria</taxon>
        <taxon>Bacillati</taxon>
        <taxon>Bacillota</taxon>
        <taxon>Clostridia</taxon>
        <taxon>Eubacteriales</taxon>
        <taxon>Symbiobacteriaceae</taxon>
        <taxon>Symbiobacterium</taxon>
    </lineage>
</organism>
<sequence length="185" mass="20644">MISVNDLRNGMTIEMDGTVYQVIEFLHVKPGKGAAFVRTKLKNILTGATIETTFRAGEKVEQANVDRREYQFLYADQGVWVFMNNETFEQIELTEEQVGNAPNFLLENMTVQIASWKGQVIGVDLPNTVELKVVETEPGFKGDTATGTYKPAKLETGYVVQVPLFVNTGDVIKVDTRTGEYLSRA</sequence>
<name>EFP_SYMTH</name>
<comment type="function">
    <text evidence="1">Involved in peptide bond synthesis. Stimulates efficient translation and peptide-bond synthesis on native or reconstituted 70S ribosomes in vitro. Probably functions indirectly by altering the affinity of the ribosome for aminoacyl-tRNA, thus increasing their reactivity as acceptors for peptidyl transferase.</text>
</comment>
<comment type="pathway">
    <text evidence="1">Protein biosynthesis; polypeptide chain elongation.</text>
</comment>
<comment type="subcellular location">
    <subcellularLocation>
        <location evidence="1">Cytoplasm</location>
    </subcellularLocation>
</comment>
<comment type="similarity">
    <text evidence="1">Belongs to the elongation factor P family.</text>
</comment>
<reference key="1">
    <citation type="journal article" date="2004" name="Nucleic Acids Res.">
        <title>Genome sequence of Symbiobacterium thermophilum, an uncultivable bacterium that depends on microbial commensalism.</title>
        <authorList>
            <person name="Ueda K."/>
            <person name="Yamashita A."/>
            <person name="Ishikawa J."/>
            <person name="Shimada M."/>
            <person name="Watsuji T."/>
            <person name="Morimura K."/>
            <person name="Ikeda H."/>
            <person name="Hattori M."/>
            <person name="Beppu T."/>
        </authorList>
    </citation>
    <scope>NUCLEOTIDE SEQUENCE [LARGE SCALE GENOMIC DNA]</scope>
    <source>
        <strain>DSM 24528 / JCM 14929 / IAM 14863 / T</strain>
    </source>
</reference>
<keyword id="KW-0963">Cytoplasm</keyword>
<keyword id="KW-0251">Elongation factor</keyword>
<keyword id="KW-0648">Protein biosynthesis</keyword>
<keyword id="KW-1185">Reference proteome</keyword>
<proteinExistence type="inferred from homology"/>
<protein>
    <recommendedName>
        <fullName evidence="1">Elongation factor P</fullName>
        <shortName evidence="1">EF-P</shortName>
    </recommendedName>
</protein>
<accession>Q67N94</accession>
<evidence type="ECO:0000255" key="1">
    <source>
        <dbReference type="HAMAP-Rule" id="MF_00141"/>
    </source>
</evidence>